<accession>Q89AY7</accession>
<evidence type="ECO:0000255" key="1"/>
<evidence type="ECO:0000305" key="2"/>
<keyword id="KW-0472">Membrane</keyword>
<keyword id="KW-1185">Reference proteome</keyword>
<keyword id="KW-0812">Transmembrane</keyword>
<keyword id="KW-1133">Transmembrane helix</keyword>
<name>Y081_BUCBP</name>
<reference key="1">
    <citation type="journal article" date="2003" name="Proc. Natl. Acad. Sci. U.S.A.">
        <title>Reductive genome evolution in Buchnera aphidicola.</title>
        <authorList>
            <person name="van Ham R.C.H.J."/>
            <person name="Kamerbeek J."/>
            <person name="Palacios C."/>
            <person name="Rausell C."/>
            <person name="Abascal F."/>
            <person name="Bastolla U."/>
            <person name="Fernandez J.M."/>
            <person name="Jimenez L."/>
            <person name="Postigo M."/>
            <person name="Silva F.J."/>
            <person name="Tamames J."/>
            <person name="Viguera E."/>
            <person name="Latorre A."/>
            <person name="Valencia A."/>
            <person name="Moran F."/>
            <person name="Moya A."/>
        </authorList>
    </citation>
    <scope>NUCLEOTIDE SEQUENCE [LARGE SCALE GENOMIC DNA]</scope>
    <source>
        <strain>Bp</strain>
    </source>
</reference>
<gene>
    <name type="ordered locus">bbp_081</name>
</gene>
<proteinExistence type="predicted"/>
<protein>
    <recommendedName>
        <fullName>Uncharacterized protein bbp_081</fullName>
    </recommendedName>
</protein>
<feature type="chain" id="PRO_0000216248" description="Uncharacterized protein bbp_081">
    <location>
        <begin position="1"/>
        <end position="717"/>
    </location>
</feature>
<feature type="transmembrane region" description="Helical" evidence="1">
    <location>
        <begin position="19"/>
        <end position="38"/>
    </location>
</feature>
<comment type="subcellular location">
    <subcellularLocation>
        <location evidence="2">Membrane</location>
        <topology evidence="2">Single-pass membrane protein</topology>
    </subcellularLocation>
</comment>
<comment type="similarity">
    <text evidence="2">To E.coli YtfN.</text>
</comment>
<dbReference type="EMBL" id="AE016826">
    <property type="protein sequence ID" value="AAO26817.1"/>
    <property type="molecule type" value="Genomic_DNA"/>
</dbReference>
<dbReference type="SMR" id="Q89AY7"/>
<dbReference type="STRING" id="224915.bbp_081"/>
<dbReference type="KEGG" id="bab:bbp_081"/>
<dbReference type="eggNOG" id="COG2911">
    <property type="taxonomic scope" value="Bacteria"/>
</dbReference>
<dbReference type="HOGENOM" id="CLU_385295_0_0_6"/>
<dbReference type="Proteomes" id="UP000000601">
    <property type="component" value="Chromosome"/>
</dbReference>
<dbReference type="GO" id="GO:0016020">
    <property type="term" value="C:membrane"/>
    <property type="evidence" value="ECO:0007669"/>
    <property type="project" value="UniProtKB-SubCell"/>
</dbReference>
<sequence length="717" mass="86111">MDKLYVLVGFILMNILKKVFLSTIFVSIIFCLGILFLVKSNLGLRTIFFLSHYLVPELEVDQLIGTLNNFKLINVKYKSKNILLTIKVLQLNFIVHIFKKFYIDVNLVTCKNVNFFIKNINDVNFKTNGVFPLNLKSKFFSYFFIFFKDIRFYNFTANVDGVELFTNFFSSKGYWNKQFLELEFFKTDVVSINNFYCFDSTNNYCRFNSRNFLVCCRQYLKMLFNYFKKGNFDTFVNIDIANFSCNKIYLEDNKNISISKFFINFRIFKNSVNIKRLFFVFRRMFKVRINGFININQNYINLTINCVNKNEIYGSSSNIKIIIHGLWLSILKINFYIDKININFLIKRILMPEKLIFKCKLRLSNLNSYIHRKNFSYLNNFKLEIFTNSSEYFFQSYSVLNIKDVFPIKFCLLGIGNYKNIFLKLIKFRIFQKKILCNYEWKYCSNRDLVQKFLLNKFFDNLKKTKLLINIKKIILNNDFNEKILLLSSNFLNIRDKYIFTDVHIISGKNSFSMRSDFNSFLNLNVFFSIKDLKFFFPNFDGKFDIDVKIFRSINYYHAICKFIGNKLDFNIFKIVNIKFLIDINSKDFLNTIFLSVTKLFFGNLYVNHVFFKIKNEHDKRYLATICLSSYNNFMRLILDKYFNINVFIQTNVLRKINYFKFYLDSNVNKTVFALISYLFSNYYKKININYVSFFKHSIKSKFVKFLNKFIYVKQIF</sequence>
<organism>
    <name type="scientific">Buchnera aphidicola subsp. Baizongia pistaciae (strain Bp)</name>
    <dbReference type="NCBI Taxonomy" id="224915"/>
    <lineage>
        <taxon>Bacteria</taxon>
        <taxon>Pseudomonadati</taxon>
        <taxon>Pseudomonadota</taxon>
        <taxon>Gammaproteobacteria</taxon>
        <taxon>Enterobacterales</taxon>
        <taxon>Erwiniaceae</taxon>
        <taxon>Buchnera</taxon>
    </lineage>
</organism>